<comment type="function">
    <text evidence="1">Catalyzes the NADPH-dependent reduction of L-glutamate 5-phosphate into L-glutamate 5-semialdehyde and phosphate. The product spontaneously undergoes cyclization to form 1-pyrroline-5-carboxylate.</text>
</comment>
<comment type="catalytic activity">
    <reaction evidence="1">
        <text>L-glutamate 5-semialdehyde + phosphate + NADP(+) = L-glutamyl 5-phosphate + NADPH + H(+)</text>
        <dbReference type="Rhea" id="RHEA:19541"/>
        <dbReference type="ChEBI" id="CHEBI:15378"/>
        <dbReference type="ChEBI" id="CHEBI:43474"/>
        <dbReference type="ChEBI" id="CHEBI:57783"/>
        <dbReference type="ChEBI" id="CHEBI:58066"/>
        <dbReference type="ChEBI" id="CHEBI:58274"/>
        <dbReference type="ChEBI" id="CHEBI:58349"/>
        <dbReference type="EC" id="1.2.1.41"/>
    </reaction>
</comment>
<comment type="pathway">
    <text evidence="1">Amino-acid biosynthesis; L-proline biosynthesis; L-glutamate 5-semialdehyde from L-glutamate: step 2/2.</text>
</comment>
<comment type="subcellular location">
    <subcellularLocation>
        <location evidence="1">Cytoplasm</location>
    </subcellularLocation>
</comment>
<comment type="similarity">
    <text evidence="1">Belongs to the gamma-glutamyl phosphate reductase family.</text>
</comment>
<organism>
    <name type="scientific">Leptospira borgpetersenii serovar Hardjo-bovis (strain L550)</name>
    <dbReference type="NCBI Taxonomy" id="355276"/>
    <lineage>
        <taxon>Bacteria</taxon>
        <taxon>Pseudomonadati</taxon>
        <taxon>Spirochaetota</taxon>
        <taxon>Spirochaetia</taxon>
        <taxon>Leptospirales</taxon>
        <taxon>Leptospiraceae</taxon>
        <taxon>Leptospira</taxon>
    </lineage>
</organism>
<proteinExistence type="inferred from homology"/>
<feature type="chain" id="PRO_1000049960" description="Gamma-glutamyl phosphate reductase">
    <location>
        <begin position="1"/>
        <end position="416"/>
    </location>
</feature>
<keyword id="KW-0028">Amino-acid biosynthesis</keyword>
<keyword id="KW-0963">Cytoplasm</keyword>
<keyword id="KW-0521">NADP</keyword>
<keyword id="KW-0560">Oxidoreductase</keyword>
<keyword id="KW-0641">Proline biosynthesis</keyword>
<reference key="1">
    <citation type="journal article" date="2006" name="Proc. Natl. Acad. Sci. U.S.A.">
        <title>Genome reduction in Leptospira borgpetersenii reflects limited transmission potential.</title>
        <authorList>
            <person name="Bulach D.M."/>
            <person name="Zuerner R.L."/>
            <person name="Wilson P."/>
            <person name="Seemann T."/>
            <person name="McGrath A."/>
            <person name="Cullen P.A."/>
            <person name="Davis J."/>
            <person name="Johnson M."/>
            <person name="Kuczek E."/>
            <person name="Alt D.P."/>
            <person name="Peterson-Burch B."/>
            <person name="Coppel R.L."/>
            <person name="Rood J.I."/>
            <person name="Davies J.K."/>
            <person name="Adler B."/>
        </authorList>
    </citation>
    <scope>NUCLEOTIDE SEQUENCE [LARGE SCALE GENOMIC DNA]</scope>
    <source>
        <strain>L550</strain>
    </source>
</reference>
<accession>Q054P8</accession>
<dbReference type="EC" id="1.2.1.41" evidence="1"/>
<dbReference type="EMBL" id="CP000348">
    <property type="protein sequence ID" value="ABJ78197.1"/>
    <property type="molecule type" value="Genomic_DNA"/>
</dbReference>
<dbReference type="RefSeq" id="WP_011669542.1">
    <property type="nucleotide sequence ID" value="NC_008508.1"/>
</dbReference>
<dbReference type="SMR" id="Q054P8"/>
<dbReference type="KEGG" id="lbl:LBL_0619"/>
<dbReference type="HOGENOM" id="CLU_030231_0_0_12"/>
<dbReference type="UniPathway" id="UPA00098">
    <property type="reaction ID" value="UER00360"/>
</dbReference>
<dbReference type="GO" id="GO:0005737">
    <property type="term" value="C:cytoplasm"/>
    <property type="evidence" value="ECO:0007669"/>
    <property type="project" value="UniProtKB-SubCell"/>
</dbReference>
<dbReference type="GO" id="GO:0004350">
    <property type="term" value="F:glutamate-5-semialdehyde dehydrogenase activity"/>
    <property type="evidence" value="ECO:0007669"/>
    <property type="project" value="UniProtKB-UniRule"/>
</dbReference>
<dbReference type="GO" id="GO:0050661">
    <property type="term" value="F:NADP binding"/>
    <property type="evidence" value="ECO:0007669"/>
    <property type="project" value="InterPro"/>
</dbReference>
<dbReference type="GO" id="GO:0055129">
    <property type="term" value="P:L-proline biosynthetic process"/>
    <property type="evidence" value="ECO:0007669"/>
    <property type="project" value="UniProtKB-UniRule"/>
</dbReference>
<dbReference type="CDD" id="cd07079">
    <property type="entry name" value="ALDH_F18-19_ProA-GPR"/>
    <property type="match status" value="1"/>
</dbReference>
<dbReference type="FunFam" id="3.40.309.10:FF:000028">
    <property type="entry name" value="Gamma-glutamyl phosphate reductase"/>
    <property type="match status" value="1"/>
</dbReference>
<dbReference type="Gene3D" id="3.40.605.10">
    <property type="entry name" value="Aldehyde Dehydrogenase, Chain A, domain 1"/>
    <property type="match status" value="1"/>
</dbReference>
<dbReference type="Gene3D" id="3.40.309.10">
    <property type="entry name" value="Aldehyde Dehydrogenase, Chain A, domain 2"/>
    <property type="match status" value="1"/>
</dbReference>
<dbReference type="HAMAP" id="MF_00412">
    <property type="entry name" value="ProA"/>
    <property type="match status" value="1"/>
</dbReference>
<dbReference type="InterPro" id="IPR016161">
    <property type="entry name" value="Ald_DH/histidinol_DH"/>
</dbReference>
<dbReference type="InterPro" id="IPR016163">
    <property type="entry name" value="Ald_DH_C"/>
</dbReference>
<dbReference type="InterPro" id="IPR016162">
    <property type="entry name" value="Ald_DH_N"/>
</dbReference>
<dbReference type="InterPro" id="IPR015590">
    <property type="entry name" value="Aldehyde_DH_dom"/>
</dbReference>
<dbReference type="InterPro" id="IPR020593">
    <property type="entry name" value="G-glutamylP_reductase_CS"/>
</dbReference>
<dbReference type="InterPro" id="IPR012134">
    <property type="entry name" value="Glu-5-SA_DH"/>
</dbReference>
<dbReference type="InterPro" id="IPR000965">
    <property type="entry name" value="GPR_dom"/>
</dbReference>
<dbReference type="NCBIfam" id="NF001221">
    <property type="entry name" value="PRK00197.1"/>
    <property type="match status" value="1"/>
</dbReference>
<dbReference type="NCBIfam" id="TIGR00407">
    <property type="entry name" value="proA"/>
    <property type="match status" value="1"/>
</dbReference>
<dbReference type="PANTHER" id="PTHR11063:SF8">
    <property type="entry name" value="DELTA-1-PYRROLINE-5-CARBOXYLATE SYNTHASE"/>
    <property type="match status" value="1"/>
</dbReference>
<dbReference type="PANTHER" id="PTHR11063">
    <property type="entry name" value="GLUTAMATE SEMIALDEHYDE DEHYDROGENASE"/>
    <property type="match status" value="1"/>
</dbReference>
<dbReference type="Pfam" id="PF00171">
    <property type="entry name" value="Aldedh"/>
    <property type="match status" value="1"/>
</dbReference>
<dbReference type="PIRSF" id="PIRSF000151">
    <property type="entry name" value="GPR"/>
    <property type="match status" value="1"/>
</dbReference>
<dbReference type="SUPFAM" id="SSF53720">
    <property type="entry name" value="ALDH-like"/>
    <property type="match status" value="1"/>
</dbReference>
<dbReference type="PROSITE" id="PS01223">
    <property type="entry name" value="PROA"/>
    <property type="match status" value="1"/>
</dbReference>
<protein>
    <recommendedName>
        <fullName evidence="1">Gamma-glutamyl phosphate reductase</fullName>
        <shortName evidence="1">GPR</shortName>
        <ecNumber evidence="1">1.2.1.41</ecNumber>
    </recommendedName>
    <alternativeName>
        <fullName evidence="1">Glutamate-5-semialdehyde dehydrogenase</fullName>
    </alternativeName>
    <alternativeName>
        <fullName evidence="1">Glutamyl-gamma-semialdehyde dehydrogenase</fullName>
        <shortName evidence="1">GSA dehydrogenase</shortName>
    </alternativeName>
</protein>
<sequence>MKEIEYVKELSYRAKKASRTLKSLSSFQKNKVLLELANLLEKRKSEILSANEFDLKNGKEKNLPSALMDRLLLNEKRIDSMAFAVREIVSLPDPVGEVTRGLTLPNGLELVTKRVPLGVVMVIYESRPNVTIDVGALSFKSGNACILRGGSEAFHSNEILVKLFHEILNKEGIDTSAITFVDKTDRSFMLPFLQQTPSIDVVVPRGGEGLIKFISEHSMIPVVKHDKGVCNLYIDQDADPAKVIPIVINSKVQRPGVCNATENLILHNGYPFRKELLEALAKEGVELLLDPSALSLYPKGRPVKEEDYQEEFLDLRLSVKTVSSLEEALTFIERTSSGHTEAIITEDLNAAKMFTNSLDSAALFVNCSTRFHDGAEFGLGAEVGISTGKLHVRGPMGLVHLTTTTTYVTGNGQIRN</sequence>
<evidence type="ECO:0000255" key="1">
    <source>
        <dbReference type="HAMAP-Rule" id="MF_00412"/>
    </source>
</evidence>
<gene>
    <name evidence="1" type="primary">proA</name>
    <name type="ordered locus">LBL_0619</name>
</gene>
<name>PROA_LEPBL</name>